<feature type="chain" id="PRO_0000138643" description="DNA repair protein RAD50">
    <location>
        <begin position="1"/>
        <end position="1312"/>
    </location>
</feature>
<feature type="domain" description="Zinc-hook" evidence="7">
    <location>
        <begin position="635"/>
        <end position="734"/>
    </location>
</feature>
<feature type="coiled-coil region" evidence="6">
    <location>
        <begin position="200"/>
        <end position="534"/>
    </location>
</feature>
<feature type="coiled-coil region" evidence="6">
    <location>
        <begin position="635"/>
        <end position="673"/>
    </location>
</feature>
<feature type="coiled-coil region" evidence="6">
    <location>
        <begin position="706"/>
        <end position="734"/>
    </location>
</feature>
<feature type="coiled-coil region" evidence="6">
    <location>
        <begin position="754"/>
        <end position="954"/>
    </location>
</feature>
<feature type="coiled-coil region" evidence="6">
    <location>
        <begin position="1019"/>
        <end position="1075"/>
    </location>
</feature>
<feature type="binding site" evidence="1">
    <location>
        <position position="13"/>
    </location>
    <ligand>
        <name>ATP</name>
        <dbReference type="ChEBI" id="CHEBI:30616"/>
    </ligand>
</feature>
<feature type="binding site" evidence="1">
    <location>
        <position position="38"/>
    </location>
    <ligand>
        <name>ATP</name>
        <dbReference type="ChEBI" id="CHEBI:30616"/>
    </ligand>
</feature>
<feature type="binding site" evidence="1">
    <location>
        <position position="39"/>
    </location>
    <ligand>
        <name>ATP</name>
        <dbReference type="ChEBI" id="CHEBI:30616"/>
    </ligand>
</feature>
<feature type="binding site" evidence="1">
    <location>
        <position position="41"/>
    </location>
    <ligand>
        <name>ATP</name>
        <dbReference type="ChEBI" id="CHEBI:30616"/>
    </ligand>
</feature>
<feature type="binding site" evidence="1">
    <location>
        <position position="42"/>
    </location>
    <ligand>
        <name>ATP</name>
        <dbReference type="ChEBI" id="CHEBI:30616"/>
    </ligand>
</feature>
<feature type="binding site" evidence="1">
    <location>
        <position position="43"/>
    </location>
    <ligand>
        <name>ATP</name>
        <dbReference type="ChEBI" id="CHEBI:30616"/>
    </ligand>
</feature>
<feature type="binding site" evidence="1">
    <location>
        <position position="43"/>
    </location>
    <ligand>
        <name>Mg(2+)</name>
        <dbReference type="ChEBI" id="CHEBI:18420"/>
    </ligand>
</feature>
<feature type="binding site" evidence="1">
    <location>
        <position position="44"/>
    </location>
    <ligand>
        <name>ATP</name>
        <dbReference type="ChEBI" id="CHEBI:30616"/>
    </ligand>
</feature>
<feature type="binding site" evidence="1">
    <location>
        <position position="67"/>
    </location>
    <ligand>
        <name>ATP</name>
        <dbReference type="ChEBI" id="CHEBI:30616"/>
    </ligand>
</feature>
<feature type="binding site" evidence="1">
    <location>
        <position position="69"/>
    </location>
    <ligand>
        <name>ATP</name>
        <dbReference type="ChEBI" id="CHEBI:30616"/>
    </ligand>
</feature>
<feature type="binding site" evidence="1">
    <location>
        <position position="159"/>
    </location>
    <ligand>
        <name>ATP</name>
        <dbReference type="ChEBI" id="CHEBI:30616"/>
    </ligand>
</feature>
<feature type="binding site" evidence="1">
    <location>
        <position position="159"/>
    </location>
    <ligand>
        <name>Mg(2+)</name>
        <dbReference type="ChEBI" id="CHEBI:18420"/>
    </ligand>
</feature>
<feature type="binding site" evidence="7">
    <location>
        <position position="681"/>
    </location>
    <ligand>
        <name>Zn(2+)</name>
        <dbReference type="ChEBI" id="CHEBI:29105"/>
    </ligand>
</feature>
<feature type="binding site" evidence="7">
    <location>
        <position position="684"/>
    </location>
    <ligand>
        <name>Zn(2+)</name>
        <dbReference type="ChEBI" id="CHEBI:29105"/>
    </ligand>
</feature>
<feature type="modified residue" description="Phosphoserine" evidence="4">
    <location>
        <position position="635"/>
    </location>
</feature>
<feature type="modified residue" description="Phosphothreonine" evidence="4">
    <location>
        <position position="690"/>
    </location>
</feature>
<feature type="modified residue" description="N6-acetyllysine" evidence="4">
    <location>
        <position position="959"/>
    </location>
</feature>
<evidence type="ECO:0000250" key="1">
    <source>
        <dbReference type="UniProtKB" id="G0SHW7"/>
    </source>
</evidence>
<evidence type="ECO:0000250" key="2">
    <source>
        <dbReference type="UniProtKB" id="P58301"/>
    </source>
</evidence>
<evidence type="ECO:0000250" key="3">
    <source>
        <dbReference type="UniProtKB" id="P70388"/>
    </source>
</evidence>
<evidence type="ECO:0000250" key="4">
    <source>
        <dbReference type="UniProtKB" id="Q92878"/>
    </source>
</evidence>
<evidence type="ECO:0000250" key="5">
    <source>
        <dbReference type="UniProtKB" id="Q9X1X1"/>
    </source>
</evidence>
<evidence type="ECO:0000255" key="6"/>
<evidence type="ECO:0000255" key="7">
    <source>
        <dbReference type="PROSITE-ProRule" id="PRU00471"/>
    </source>
</evidence>
<evidence type="ECO:0000269" key="8">
    <source>
    </source>
</evidence>
<evidence type="ECO:0000305" key="9"/>
<accession>Q9JIL8</accession>
<organism>
    <name type="scientific">Rattus norvegicus</name>
    <name type="common">Rat</name>
    <dbReference type="NCBI Taxonomy" id="10116"/>
    <lineage>
        <taxon>Eukaryota</taxon>
        <taxon>Metazoa</taxon>
        <taxon>Chordata</taxon>
        <taxon>Craniata</taxon>
        <taxon>Vertebrata</taxon>
        <taxon>Euteleostomi</taxon>
        <taxon>Mammalia</taxon>
        <taxon>Eutheria</taxon>
        <taxon>Euarchontoglires</taxon>
        <taxon>Glires</taxon>
        <taxon>Rodentia</taxon>
        <taxon>Myomorpha</taxon>
        <taxon>Muroidea</taxon>
        <taxon>Muridae</taxon>
        <taxon>Murinae</taxon>
        <taxon>Rattus</taxon>
    </lineage>
</organism>
<sequence length="1312" mass="153784">MSRIEKMSTLGVRSFGIEDKDKQIISFFSPLTILVGPNGAGKTTIIECLKYICTGDFPPGTKGNTFVHDPKVAQETDVRAQIRLQFRDVNGEMVLVQRSMLCSQKSKKTEFKTLEGVITRIKHGEKVSLSSKCAEIDREMISCLGVSKSVLNNVIFCHQEDSNWPLSEGKALKQKFDEIFSATRYIKALDTLRQVRQTQGQKVKECQTELKYLRQNKEKACEIRDQITSKEAQLASSREIVKAYENELEPLKNRLKEIEHNLSKIMRLDNEIKALDSRKKQMEKDNSELEQKMEKVFQGTDEQLNDLYHNHQRTVREKERRLVDCQRELEKLSKEARLLNQERAELLVEQGRLQLQADRHQEHIRARDSLIQSLAAHLELDGFERGPFSERQIKNFHELVRERQEREAKTASQLLSDLTDKEALKQRQMDEMRDKKSGLGRMIELKTEILTKKQTELRNVRNELQQLEGSSDRILELDQELTKAERELSKAEKNSSIETLKAEILNLQSEKADLDRNLRKLDQEMEQLNHHTTTRTQMEMLTKDKTDKDEQIRKIKSRHSDELTSLLGYFPNKKQLEDWLHSKSKEINQTRDRLAKLNKELASAEQNKNHINNELKKKEEQLSSYEDKLFDVCGSQDFESDLDRLKEDIEKSSKQRAMLAGATAVYSQFITQLTDENQSCCPGCQRVFQTEAELQEVISDLQSKLRLAPDKLKSTESELKKKERRRDEMLGLVPMRQSIIDLKEKEIPELRNRLQSVNRDIQRLKNDIEEQETLLGTVMPEEESAKVCLTDVTIMERFQMELKDVERKIAQQAAKLQGVDLDRTVQQVNQEKQEKQHKLDTVSSKIELNRKLIQDQQEQIQHLKSKTNELKSEKLQIATNLQRRQQMEEQTVELSTEVQSLNREIKDAKEQINPLEIALEKLQQEKEELIHRKNTSNKMAQDKINDIKEKVKNIHGYMKDIENYIQDGKDDYKKQKETELNEVVIQLNECDKHKEKINKEMGTMRQDIDTKKIQERWLQDNLTLRKRREELKEVEEERKQHLKEMGQMQVLQMKNEHQKLEENIDTIKRNHSLALGRQKGYEEEILHFKKELREPQFRDAEEKYREMMIVMRTTELVNKDLDIYYKTLDHAIMKFHSMKMEEINKIIRDLWRSTYRGQDIEYIEIRSDADENVSASDKRRNYNYRVVMLKGDTALDMRGRCSAGQKVLASLIIRLALAETFCLNCGILALDEPTTNLDRENIESLAHALVEIIKSRSQQRNFQLLVITHDEDFVELLGRSEYVEKFYRVKKNIDQCSEIVKSSINSLGSYVH</sequence>
<dbReference type="EC" id="3.6.-.-" evidence="4"/>
<dbReference type="EMBL" id="AF218576">
    <property type="protein sequence ID" value="AAF91229.1"/>
    <property type="molecule type" value="mRNA"/>
</dbReference>
<dbReference type="RefSeq" id="NP_071582.1">
    <property type="nucleotide sequence ID" value="NM_022246.1"/>
</dbReference>
<dbReference type="SMR" id="Q9JIL8"/>
<dbReference type="BioGRID" id="248931">
    <property type="interactions" value="1"/>
</dbReference>
<dbReference type="FunCoup" id="Q9JIL8">
    <property type="interactions" value="3162"/>
</dbReference>
<dbReference type="STRING" id="10116.ENSRNOP00000062378"/>
<dbReference type="CarbonylDB" id="Q9JIL8"/>
<dbReference type="iPTMnet" id="Q9JIL8"/>
<dbReference type="PhosphoSitePlus" id="Q9JIL8"/>
<dbReference type="jPOST" id="Q9JIL8"/>
<dbReference type="PaxDb" id="10116-ENSRNOP00000062378"/>
<dbReference type="GeneID" id="64012"/>
<dbReference type="KEGG" id="rno:64012"/>
<dbReference type="UCSC" id="RGD:621542">
    <property type="organism name" value="rat"/>
</dbReference>
<dbReference type="AGR" id="RGD:621542"/>
<dbReference type="CTD" id="10111"/>
<dbReference type="RGD" id="621542">
    <property type="gene designation" value="Rad50"/>
</dbReference>
<dbReference type="eggNOG" id="KOG0962">
    <property type="taxonomic scope" value="Eukaryota"/>
</dbReference>
<dbReference type="InParanoid" id="Q9JIL8"/>
<dbReference type="PhylomeDB" id="Q9JIL8"/>
<dbReference type="Reactome" id="R-RNO-2559586">
    <property type="pathway name" value="DNA Damage/Telomere Stress Induced Senescence"/>
</dbReference>
<dbReference type="Reactome" id="R-RNO-5685938">
    <property type="pathway name" value="HDR through Single Strand Annealing (SSA)"/>
</dbReference>
<dbReference type="Reactome" id="R-RNO-5685939">
    <property type="pathway name" value="HDR through MMEJ (alt-NHEJ)"/>
</dbReference>
<dbReference type="Reactome" id="R-RNO-5685942">
    <property type="pathway name" value="HDR through Homologous Recombination (HRR)"/>
</dbReference>
<dbReference type="Reactome" id="R-RNO-5693548">
    <property type="pathway name" value="Sensing of DNA Double Strand Breaks"/>
</dbReference>
<dbReference type="Reactome" id="R-RNO-5693565">
    <property type="pathway name" value="Recruitment and ATM-mediated phosphorylation of repair and signaling proteins at DNA double strand breaks"/>
</dbReference>
<dbReference type="Reactome" id="R-RNO-5693568">
    <property type="pathway name" value="Resolution of D-loop Structures through Holliday Junction Intermediates"/>
</dbReference>
<dbReference type="Reactome" id="R-RNO-5693571">
    <property type="pathway name" value="Nonhomologous End-Joining (NHEJ)"/>
</dbReference>
<dbReference type="Reactome" id="R-RNO-5693579">
    <property type="pathway name" value="Homologous DNA Pairing and Strand Exchange"/>
</dbReference>
<dbReference type="Reactome" id="R-RNO-5693607">
    <property type="pathway name" value="Processing of DNA double-strand break ends"/>
</dbReference>
<dbReference type="Reactome" id="R-RNO-5693616">
    <property type="pathway name" value="Presynaptic phase of homologous DNA pairing and strand exchange"/>
</dbReference>
<dbReference type="Reactome" id="R-RNO-6804756">
    <property type="pathway name" value="Regulation of TP53 Activity through Phosphorylation"/>
</dbReference>
<dbReference type="Reactome" id="R-RNO-69473">
    <property type="pathway name" value="G2/M DNA damage checkpoint"/>
</dbReference>
<dbReference type="PRO" id="PR:Q9JIL8"/>
<dbReference type="Proteomes" id="UP000002494">
    <property type="component" value="Unplaced"/>
</dbReference>
<dbReference type="GO" id="GO:0070533">
    <property type="term" value="C:BRCA1-C complex"/>
    <property type="evidence" value="ECO:0000266"/>
    <property type="project" value="RGD"/>
</dbReference>
<dbReference type="GO" id="GO:0000785">
    <property type="term" value="C:chromatin"/>
    <property type="evidence" value="ECO:0000314"/>
    <property type="project" value="RGD"/>
</dbReference>
<dbReference type="GO" id="GO:0000781">
    <property type="term" value="C:chromosome, telomeric region"/>
    <property type="evidence" value="ECO:0000266"/>
    <property type="project" value="RGD"/>
</dbReference>
<dbReference type="GO" id="GO:0000794">
    <property type="term" value="C:condensed nuclear chromosome"/>
    <property type="evidence" value="ECO:0000314"/>
    <property type="project" value="RGD"/>
</dbReference>
<dbReference type="GO" id="GO:0016234">
    <property type="term" value="C:inclusion body"/>
    <property type="evidence" value="ECO:0000314"/>
    <property type="project" value="RGD"/>
</dbReference>
<dbReference type="GO" id="GO:0030870">
    <property type="term" value="C:Mre11 complex"/>
    <property type="evidence" value="ECO:0000250"/>
    <property type="project" value="UniProtKB"/>
</dbReference>
<dbReference type="GO" id="GO:0005654">
    <property type="term" value="C:nucleoplasm"/>
    <property type="evidence" value="ECO:0000314"/>
    <property type="project" value="RGD"/>
</dbReference>
<dbReference type="GO" id="GO:0005634">
    <property type="term" value="C:nucleus"/>
    <property type="evidence" value="ECO:0000266"/>
    <property type="project" value="RGD"/>
</dbReference>
<dbReference type="GO" id="GO:0048471">
    <property type="term" value="C:perinuclear region of cytoplasm"/>
    <property type="evidence" value="ECO:0000314"/>
    <property type="project" value="RGD"/>
</dbReference>
<dbReference type="GO" id="GO:0045120">
    <property type="term" value="C:pronucleus"/>
    <property type="evidence" value="ECO:0000266"/>
    <property type="project" value="RGD"/>
</dbReference>
<dbReference type="GO" id="GO:0035861">
    <property type="term" value="C:site of double-strand break"/>
    <property type="evidence" value="ECO:0000250"/>
    <property type="project" value="UniProtKB"/>
</dbReference>
<dbReference type="GO" id="GO:0005524">
    <property type="term" value="F:ATP binding"/>
    <property type="evidence" value="ECO:0007669"/>
    <property type="project" value="UniProtKB-KW"/>
</dbReference>
<dbReference type="GO" id="GO:0016887">
    <property type="term" value="F:ATP hydrolysis activity"/>
    <property type="evidence" value="ECO:0000266"/>
    <property type="project" value="RGD"/>
</dbReference>
<dbReference type="GO" id="GO:0003677">
    <property type="term" value="F:DNA binding"/>
    <property type="evidence" value="ECO:0000266"/>
    <property type="project" value="RGD"/>
</dbReference>
<dbReference type="GO" id="GO:0003690">
    <property type="term" value="F:double-stranded DNA binding"/>
    <property type="evidence" value="ECO:0000314"/>
    <property type="project" value="RGD"/>
</dbReference>
<dbReference type="GO" id="GO:0003691">
    <property type="term" value="F:double-stranded telomeric DNA binding"/>
    <property type="evidence" value="ECO:0000318"/>
    <property type="project" value="GO_Central"/>
</dbReference>
<dbReference type="GO" id="GO:0051880">
    <property type="term" value="F:G-quadruplex DNA binding"/>
    <property type="evidence" value="ECO:0000318"/>
    <property type="project" value="GO_Central"/>
</dbReference>
<dbReference type="GO" id="GO:0042802">
    <property type="term" value="F:identical protein binding"/>
    <property type="evidence" value="ECO:0000266"/>
    <property type="project" value="RGD"/>
</dbReference>
<dbReference type="GO" id="GO:0046872">
    <property type="term" value="F:metal ion binding"/>
    <property type="evidence" value="ECO:0007669"/>
    <property type="project" value="UniProtKB-KW"/>
</dbReference>
<dbReference type="GO" id="GO:0043539">
    <property type="term" value="F:protein serine/threonine kinase activator activity"/>
    <property type="evidence" value="ECO:0000250"/>
    <property type="project" value="UniProtKB"/>
</dbReference>
<dbReference type="GO" id="GO:0044877">
    <property type="term" value="F:protein-containing complex binding"/>
    <property type="evidence" value="ECO:0000314"/>
    <property type="project" value="RGD"/>
</dbReference>
<dbReference type="GO" id="GO:0030674">
    <property type="term" value="F:protein-macromolecule adaptor activity"/>
    <property type="evidence" value="ECO:0000250"/>
    <property type="project" value="UniProtKB"/>
</dbReference>
<dbReference type="GO" id="GO:0043047">
    <property type="term" value="F:single-stranded telomeric DNA binding"/>
    <property type="evidence" value="ECO:0000318"/>
    <property type="project" value="GO_Central"/>
</dbReference>
<dbReference type="GO" id="GO:0051276">
    <property type="term" value="P:chromosome organization"/>
    <property type="evidence" value="ECO:0000266"/>
    <property type="project" value="RGD"/>
</dbReference>
<dbReference type="GO" id="GO:0070192">
    <property type="term" value="P:chromosome organization involved in meiotic cell cycle"/>
    <property type="evidence" value="ECO:0000266"/>
    <property type="project" value="RGD"/>
</dbReference>
<dbReference type="GO" id="GO:0006974">
    <property type="term" value="P:DNA damage response"/>
    <property type="evidence" value="ECO:0000270"/>
    <property type="project" value="RGD"/>
</dbReference>
<dbReference type="GO" id="GO:0000729">
    <property type="term" value="P:DNA double-strand break processing"/>
    <property type="evidence" value="ECO:0000250"/>
    <property type="project" value="UniProtKB"/>
</dbReference>
<dbReference type="GO" id="GO:0006310">
    <property type="term" value="P:DNA recombination"/>
    <property type="evidence" value="ECO:0000250"/>
    <property type="project" value="UniProtKB"/>
</dbReference>
<dbReference type="GO" id="GO:0006281">
    <property type="term" value="P:DNA repair"/>
    <property type="evidence" value="ECO:0000250"/>
    <property type="project" value="UniProtKB"/>
</dbReference>
<dbReference type="GO" id="GO:0110025">
    <property type="term" value="P:DNA strand resection involved in replication fork processing"/>
    <property type="evidence" value="ECO:0000266"/>
    <property type="project" value="RGD"/>
</dbReference>
<dbReference type="GO" id="GO:0006302">
    <property type="term" value="P:double-strand break repair"/>
    <property type="evidence" value="ECO:0000250"/>
    <property type="project" value="UniProtKB"/>
</dbReference>
<dbReference type="GO" id="GO:0000724">
    <property type="term" value="P:double-strand break repair via homologous recombination"/>
    <property type="evidence" value="ECO:0000266"/>
    <property type="project" value="RGD"/>
</dbReference>
<dbReference type="GO" id="GO:0007507">
    <property type="term" value="P:heart development"/>
    <property type="evidence" value="ECO:0000270"/>
    <property type="project" value="RGD"/>
</dbReference>
<dbReference type="GO" id="GO:0046597">
    <property type="term" value="P:host-mediated suppression of symbiont invasion"/>
    <property type="evidence" value="ECO:0000315"/>
    <property type="project" value="RGD"/>
</dbReference>
<dbReference type="GO" id="GO:1904354">
    <property type="term" value="P:negative regulation of telomere capping"/>
    <property type="evidence" value="ECO:0000266"/>
    <property type="project" value="RGD"/>
</dbReference>
<dbReference type="GO" id="GO:2000781">
    <property type="term" value="P:positive regulation of double-strand break repair"/>
    <property type="evidence" value="ECO:0000266"/>
    <property type="project" value="RGD"/>
</dbReference>
<dbReference type="GO" id="GO:0032206">
    <property type="term" value="P:positive regulation of telomere maintenance"/>
    <property type="evidence" value="ECO:0000266"/>
    <property type="project" value="RGD"/>
</dbReference>
<dbReference type="GO" id="GO:0062176">
    <property type="term" value="P:R-loop processing"/>
    <property type="evidence" value="ECO:0000250"/>
    <property type="project" value="UniProtKB"/>
</dbReference>
<dbReference type="GO" id="GO:0007131">
    <property type="term" value="P:reciprocal meiotic recombination"/>
    <property type="evidence" value="ECO:0000304"/>
    <property type="project" value="RGD"/>
</dbReference>
<dbReference type="GO" id="GO:0007346">
    <property type="term" value="P:regulation of mitotic cell cycle"/>
    <property type="evidence" value="ECO:0000266"/>
    <property type="project" value="RGD"/>
</dbReference>
<dbReference type="GO" id="GO:0000019">
    <property type="term" value="P:regulation of mitotic recombination"/>
    <property type="evidence" value="ECO:0000250"/>
    <property type="project" value="UniProtKB"/>
</dbReference>
<dbReference type="GO" id="GO:0044752">
    <property type="term" value="P:response to human chorionic gonadotropin"/>
    <property type="evidence" value="ECO:0000270"/>
    <property type="project" value="RGD"/>
</dbReference>
<dbReference type="GO" id="GO:0000723">
    <property type="term" value="P:telomere maintenance"/>
    <property type="evidence" value="ECO:0000304"/>
    <property type="project" value="RGD"/>
</dbReference>
<dbReference type="GO" id="GO:0000722">
    <property type="term" value="P:telomere maintenance via recombination"/>
    <property type="evidence" value="ECO:0000318"/>
    <property type="project" value="GO_Central"/>
</dbReference>
<dbReference type="GO" id="GO:0007004">
    <property type="term" value="P:telomere maintenance via telomerase"/>
    <property type="evidence" value="ECO:0000250"/>
    <property type="project" value="UniProtKB"/>
</dbReference>
<dbReference type="GO" id="GO:0031860">
    <property type="term" value="P:telomeric 3' overhang formation"/>
    <property type="evidence" value="ECO:0000266"/>
    <property type="project" value="RGD"/>
</dbReference>
<dbReference type="FunFam" id="3.40.50.300:FF:001037">
    <property type="entry name" value="DNA repair protein RAD50"/>
    <property type="match status" value="1"/>
</dbReference>
<dbReference type="FunFam" id="3.40.50.300:FF:001065">
    <property type="entry name" value="DNA repair protein RAD50 isoform X1"/>
    <property type="match status" value="1"/>
</dbReference>
<dbReference type="Gene3D" id="3.40.50.300">
    <property type="entry name" value="P-loop containing nucleotide triphosphate hydrolases"/>
    <property type="match status" value="2"/>
</dbReference>
<dbReference type="InterPro" id="IPR027417">
    <property type="entry name" value="P-loop_NTPase"/>
</dbReference>
<dbReference type="InterPro" id="IPR038729">
    <property type="entry name" value="Rad50/SbcC_AAA"/>
</dbReference>
<dbReference type="InterPro" id="IPR004584">
    <property type="entry name" value="Rad50_eukaryotes"/>
</dbReference>
<dbReference type="InterPro" id="IPR013134">
    <property type="entry name" value="Zn_hook_RAD50"/>
</dbReference>
<dbReference type="NCBIfam" id="TIGR00606">
    <property type="entry name" value="rad50"/>
    <property type="match status" value="1"/>
</dbReference>
<dbReference type="PANTHER" id="PTHR18867:SF12">
    <property type="entry name" value="DNA REPAIR PROTEIN RAD50"/>
    <property type="match status" value="1"/>
</dbReference>
<dbReference type="PANTHER" id="PTHR18867">
    <property type="entry name" value="RAD50"/>
    <property type="match status" value="1"/>
</dbReference>
<dbReference type="Pfam" id="PF13476">
    <property type="entry name" value="AAA_23"/>
    <property type="match status" value="1"/>
</dbReference>
<dbReference type="Pfam" id="PF04423">
    <property type="entry name" value="Rad50_zn_hook"/>
    <property type="match status" value="1"/>
</dbReference>
<dbReference type="Pfam" id="PF13558">
    <property type="entry name" value="SbcC_Walker_B"/>
    <property type="match status" value="1"/>
</dbReference>
<dbReference type="SUPFAM" id="SSF52540">
    <property type="entry name" value="P-loop containing nucleoside triphosphate hydrolases"/>
    <property type="match status" value="2"/>
</dbReference>
<dbReference type="PROSITE" id="PS51131">
    <property type="entry name" value="ZN_HOOK"/>
    <property type="match status" value="1"/>
</dbReference>
<comment type="function">
    <text evidence="4 5">Component of the MRN complex, which plays a central role in double-strand break (DSB) repair, DNA recombination, maintenance of telomere integrity and meiosis. The MRN complex is involved in the repair of DNA double-strand breaks (DSBs) via homologous recombination (HR), an error-free mechanism which primarily occurs during S and G2 phases. The complex (1) mediates the end resection of damaged DNA, which generates proper single-stranded DNA, a key initial steps in HR, and is (2) required for the recruitment of other repair factors and efficient activation of ATM and ATR upon DNA damage. The MRN complex possesses single-strand endonuclease activity and double-strand-specific 3'-5' exonuclease activity, which are provided by MRE11, to initiate end resection, which is required for single-strand invasion and recombination. Within the complex, RAD50 is both required to bind DNA ends and hold them in close proximity and regulate the activity of MRE11 (By similarity). RAD50 provides an ATP-dependent control of MRE11 by positioning DNA ends into the MRE11 active site: ATP-binding induces a large structural change from an open form with accessible MRE11 nuclease sites into a closed form (By similarity). The MRN complex is also required for DNA damage signaling via activation of the ATM and ATR kinases: the nuclease activity of MRE11 is not required to activate ATM and ATR. The MRN complex is also required for the processing of R-loops. In telomeres the MRN complex may modulate t-loop formation (By similarity).</text>
</comment>
<comment type="catalytic activity">
    <reaction evidence="4">
        <text>ATP + H2O = ADP + phosphate + H(+)</text>
        <dbReference type="Rhea" id="RHEA:13065"/>
        <dbReference type="ChEBI" id="CHEBI:15377"/>
        <dbReference type="ChEBI" id="CHEBI:15378"/>
        <dbReference type="ChEBI" id="CHEBI:30616"/>
        <dbReference type="ChEBI" id="CHEBI:43474"/>
        <dbReference type="ChEBI" id="CHEBI:456216"/>
    </reaction>
</comment>
<comment type="cofactor">
    <cofactor evidence="4">
        <name>Zn(2+)</name>
        <dbReference type="ChEBI" id="CHEBI:29105"/>
    </cofactor>
    <text evidence="4">Binds 1 zinc ion per homodimer.</text>
</comment>
<comment type="subunit">
    <text evidence="3 4">Component of the MRN complex composed of two heterodimers RAD50 and MRE11 associated with a single NBN. The MRN complexes dimerize on DNA to form joined MRN-MRN oligomers required for DNA double-strand break repair. As part of the MRN complex, interacts with MCM8 and MCM9; the interaction recruits the complex to DNA repair sites. Component of the BASC complex, at least composed of BRCA1, MSH2, MSH6, MLH1, ATM, BLM, RAD50, MRE11 and NBN. Found in a complex with TERF2. Interacts with RINT1. Interacts with BRCA1 via its N-terminal domain. Interacts with DCLRE1C/Artemis. Interacts with MRNIP (By similarity). Interacts with CYREN (via XLF motif) (By similarity). Interacts with C1QBP and MRE11; interaction takes place in absence of DNA damage to form the MRC (MRE11-RAD50-C1QBP) complex that inhibits the activity of MRE11 (By similarity).</text>
</comment>
<comment type="subcellular location">
    <subcellularLocation>
        <location evidence="4">Nucleus</location>
    </subcellularLocation>
    <subcellularLocation>
        <location evidence="4">Chromosome</location>
        <location evidence="4">Telomere</location>
    </subcellularLocation>
    <subcellularLocation>
        <location evidence="4">Chromosome</location>
    </subcellularLocation>
    <text evidence="4">Localizes to discrete nuclear foci after treatment with genotoxic agents. Localizes to DNA double-strand breaks (DSBs).</text>
</comment>
<comment type="tissue specificity">
    <text evidence="8">Present at low levels in the heart at fetal-day 17, at relatively constant levels at postnatal days 10, 17 and 21 and at slightly lower levels in the adult heart. Detected in liver, kidney and lung. Barely detectable in skeletal muscle with slightly higher levels observed in brain and the ventricles of the heart (at protein level).</text>
</comment>
<comment type="domain">
    <text evidence="2">The zinc-hook, which separates the large intramolecular coiled coil regions, contains 2 Cys residues that coordinate one molecule of zinc with the help of the 2 Cys residues of the zinc-hook of another RAD50 molecule, thereby forming a V-shaped homodimer. The two heads of the homodimer, which constitute the ATP-binding domain, interact with the MRE11 homodimer.</text>
</comment>
<comment type="PTM">
    <text evidence="4">Phosphorylation at Ser-635 by ATM in response to DNA damage is required for double-strand break (DSB) repair.</text>
</comment>
<comment type="similarity">
    <text evidence="9">Belongs to the SMC family. RAD50 subfamily.</text>
</comment>
<name>RAD50_RAT</name>
<proteinExistence type="evidence at protein level"/>
<reference key="1">
    <citation type="journal article" date="2000" name="Nucleic Acids Res.">
        <title>The MRE11-NBS1-RAD50 pathway is perturbed in SV40 large T antigen-immortalized AT-1, AT-2 and HL-1 cardiomyocytes.</title>
        <authorList>
            <person name="Lanson N.A. Jr."/>
            <person name="Egeland D.B."/>
            <person name="Royals B.A."/>
            <person name="Claycomb W.C."/>
        </authorList>
    </citation>
    <scope>NUCLEOTIDE SEQUENCE [MRNA]</scope>
    <scope>TISSUE SPECIFICITY</scope>
</reference>
<reference key="2">
    <citation type="submission" date="2007-09" db="UniProtKB">
        <authorList>
            <person name="Lubec G."/>
            <person name="Kang S.U."/>
            <person name="Lubec S."/>
        </authorList>
    </citation>
    <scope>PROTEIN SEQUENCE OF 454-458; 726-736; 824-832 AND 1127-1134</scope>
    <scope>IDENTIFICATION BY MASS SPECTROMETRY</scope>
    <source>
        <strain>Sprague-Dawley</strain>
        <tissue>Brain</tissue>
    </source>
</reference>
<gene>
    <name type="primary">Rad50</name>
</gene>
<protein>
    <recommendedName>
        <fullName>DNA repair protein RAD50</fullName>
        <ecNumber evidence="4">3.6.-.-</ecNumber>
    </recommendedName>
</protein>
<keyword id="KW-0007">Acetylation</keyword>
<keyword id="KW-0067">ATP-binding</keyword>
<keyword id="KW-0131">Cell cycle</keyword>
<keyword id="KW-0158">Chromosome</keyword>
<keyword id="KW-0175">Coiled coil</keyword>
<keyword id="KW-0903">Direct protein sequencing</keyword>
<keyword id="KW-0227">DNA damage</keyword>
<keyword id="KW-0234">DNA repair</keyword>
<keyword id="KW-0378">Hydrolase</keyword>
<keyword id="KW-0460">Magnesium</keyword>
<keyword id="KW-0469">Meiosis</keyword>
<keyword id="KW-0479">Metal-binding</keyword>
<keyword id="KW-0547">Nucleotide-binding</keyword>
<keyword id="KW-0539">Nucleus</keyword>
<keyword id="KW-0597">Phosphoprotein</keyword>
<keyword id="KW-1185">Reference proteome</keyword>
<keyword id="KW-0779">Telomere</keyword>
<keyword id="KW-0862">Zinc</keyword>